<keyword id="KW-0687">Ribonucleoprotein</keyword>
<keyword id="KW-0689">Ribosomal protein</keyword>
<accession>C4K1G6</accession>
<name>RL27_RICPU</name>
<proteinExistence type="inferred from homology"/>
<protein>
    <recommendedName>
        <fullName evidence="1">Large ribosomal subunit protein bL27</fullName>
    </recommendedName>
    <alternativeName>
        <fullName evidence="3">50S ribosomal protein L27</fullName>
    </alternativeName>
</protein>
<feature type="chain" id="PRO_1000211940" description="Large ribosomal subunit protein bL27">
    <location>
        <begin position="1"/>
        <end position="86"/>
    </location>
</feature>
<feature type="region of interest" description="Disordered" evidence="2">
    <location>
        <begin position="1"/>
        <end position="22"/>
    </location>
</feature>
<organism>
    <name type="scientific">Rickettsia peacockii (strain Rustic)</name>
    <dbReference type="NCBI Taxonomy" id="562019"/>
    <lineage>
        <taxon>Bacteria</taxon>
        <taxon>Pseudomonadati</taxon>
        <taxon>Pseudomonadota</taxon>
        <taxon>Alphaproteobacteria</taxon>
        <taxon>Rickettsiales</taxon>
        <taxon>Rickettsiaceae</taxon>
        <taxon>Rickettsieae</taxon>
        <taxon>Rickettsia</taxon>
        <taxon>spotted fever group</taxon>
    </lineage>
</organism>
<evidence type="ECO:0000255" key="1">
    <source>
        <dbReference type="HAMAP-Rule" id="MF_00539"/>
    </source>
</evidence>
<evidence type="ECO:0000256" key="2">
    <source>
        <dbReference type="SAM" id="MobiDB-lite"/>
    </source>
</evidence>
<evidence type="ECO:0000305" key="3"/>
<sequence length="86" mass="9309">MATKKAGGSSRNGRDSAGRRLGVKKADGQYVIPGNIIVRQRGTKIHPGMNVGLGKDHTIFALIEGRVEFLTKRNHKIVNVNEIAST</sequence>
<reference key="1">
    <citation type="journal article" date="2009" name="PLoS ONE">
        <title>Genome sequence of the endosymbiont Rickettsia peacockii and comparison with virulent Rickettsia rickettsii: identification of virulence factors.</title>
        <authorList>
            <person name="Felsheim R.F."/>
            <person name="Kurtti T.J."/>
            <person name="Munderloh U.G."/>
        </authorList>
    </citation>
    <scope>NUCLEOTIDE SEQUENCE [LARGE SCALE GENOMIC DNA]</scope>
    <source>
        <strain>Rustic</strain>
    </source>
</reference>
<comment type="similarity">
    <text evidence="1">Belongs to the bacterial ribosomal protein bL27 family.</text>
</comment>
<gene>
    <name evidence="1" type="primary">rpmA</name>
    <name type="ordered locus">RPR_03180</name>
</gene>
<dbReference type="EMBL" id="CP001227">
    <property type="protein sequence ID" value="ACR47417.1"/>
    <property type="molecule type" value="Genomic_DNA"/>
</dbReference>
<dbReference type="RefSeq" id="WP_012736664.1">
    <property type="nucleotide sequence ID" value="NC_012730.1"/>
</dbReference>
<dbReference type="SMR" id="C4K1G6"/>
<dbReference type="KEGG" id="rpk:RPR_03180"/>
<dbReference type="HOGENOM" id="CLU_095424_4_1_5"/>
<dbReference type="Proteomes" id="UP000005015">
    <property type="component" value="Chromosome"/>
</dbReference>
<dbReference type="GO" id="GO:1990904">
    <property type="term" value="C:ribonucleoprotein complex"/>
    <property type="evidence" value="ECO:0007669"/>
    <property type="project" value="UniProtKB-KW"/>
</dbReference>
<dbReference type="GO" id="GO:0005840">
    <property type="term" value="C:ribosome"/>
    <property type="evidence" value="ECO:0007669"/>
    <property type="project" value="UniProtKB-KW"/>
</dbReference>
<dbReference type="GO" id="GO:0003735">
    <property type="term" value="F:structural constituent of ribosome"/>
    <property type="evidence" value="ECO:0007669"/>
    <property type="project" value="InterPro"/>
</dbReference>
<dbReference type="GO" id="GO:0006412">
    <property type="term" value="P:translation"/>
    <property type="evidence" value="ECO:0007669"/>
    <property type="project" value="UniProtKB-UniRule"/>
</dbReference>
<dbReference type="FunFam" id="2.40.50.100:FF:000020">
    <property type="entry name" value="50S ribosomal protein L27"/>
    <property type="match status" value="1"/>
</dbReference>
<dbReference type="Gene3D" id="2.40.50.100">
    <property type="match status" value="1"/>
</dbReference>
<dbReference type="HAMAP" id="MF_00539">
    <property type="entry name" value="Ribosomal_bL27"/>
    <property type="match status" value="1"/>
</dbReference>
<dbReference type="InterPro" id="IPR001684">
    <property type="entry name" value="Ribosomal_bL27"/>
</dbReference>
<dbReference type="InterPro" id="IPR018261">
    <property type="entry name" value="Ribosomal_bL27_CS"/>
</dbReference>
<dbReference type="NCBIfam" id="TIGR00062">
    <property type="entry name" value="L27"/>
    <property type="match status" value="1"/>
</dbReference>
<dbReference type="PANTHER" id="PTHR15893:SF0">
    <property type="entry name" value="LARGE RIBOSOMAL SUBUNIT PROTEIN BL27M"/>
    <property type="match status" value="1"/>
</dbReference>
<dbReference type="PANTHER" id="PTHR15893">
    <property type="entry name" value="RIBOSOMAL PROTEIN L27"/>
    <property type="match status" value="1"/>
</dbReference>
<dbReference type="Pfam" id="PF01016">
    <property type="entry name" value="Ribosomal_L27"/>
    <property type="match status" value="1"/>
</dbReference>
<dbReference type="PRINTS" id="PR00063">
    <property type="entry name" value="RIBOSOMALL27"/>
</dbReference>
<dbReference type="SUPFAM" id="SSF110324">
    <property type="entry name" value="Ribosomal L27 protein-like"/>
    <property type="match status" value="1"/>
</dbReference>
<dbReference type="PROSITE" id="PS00831">
    <property type="entry name" value="RIBOSOMAL_L27"/>
    <property type="match status" value="1"/>
</dbReference>